<evidence type="ECO:0000250" key="1"/>
<evidence type="ECO:0000256" key="2">
    <source>
        <dbReference type="SAM" id="MobiDB-lite"/>
    </source>
</evidence>
<evidence type="ECO:0000269" key="3">
    <source>
    </source>
</evidence>
<evidence type="ECO:0000269" key="4">
    <source>
    </source>
</evidence>
<evidence type="ECO:0000269" key="5">
    <source>
    </source>
</evidence>
<evidence type="ECO:0000269" key="6">
    <source>
    </source>
</evidence>
<evidence type="ECO:0000269" key="7">
    <source>
    </source>
</evidence>
<evidence type="ECO:0000303" key="8">
    <source>
    </source>
</evidence>
<evidence type="ECO:0000303" key="9">
    <source ref="4"/>
</evidence>
<evidence type="ECO:0000305" key="10"/>
<evidence type="ECO:0000305" key="11">
    <source>
    </source>
</evidence>
<evidence type="ECO:0007829" key="12">
    <source>
        <dbReference type="PDB" id="7ZRF"/>
    </source>
</evidence>
<evidence type="ECO:0007829" key="13">
    <source>
        <dbReference type="PDB" id="7ZRO"/>
    </source>
</evidence>
<evidence type="ECO:0007829" key="14">
    <source>
        <dbReference type="PDB" id="8BOO"/>
    </source>
</evidence>
<dbReference type="EMBL" id="J04440">
    <property type="protein sequence ID" value="AAB59506.1"/>
    <property type="molecule type" value="mRNA"/>
</dbReference>
<dbReference type="EMBL" id="Z47556">
    <property type="protein sequence ID" value="CAA87636.1"/>
    <property type="molecule type" value="Genomic_DNA"/>
</dbReference>
<dbReference type="EMBL" id="M81650">
    <property type="protein sequence ID" value="AAA18168.1"/>
    <property type="molecule type" value="Genomic_DNA"/>
</dbReference>
<dbReference type="EMBL" id="AY256465">
    <property type="protein sequence ID" value="AAP82462.1"/>
    <property type="molecule type" value="Genomic_DNA"/>
</dbReference>
<dbReference type="EMBL" id="AY256466">
    <property type="protein sequence ID" value="AAP82463.1"/>
    <property type="molecule type" value="Genomic_DNA"/>
</dbReference>
<dbReference type="EMBL" id="AY256467">
    <property type="protein sequence ID" value="AAP82464.1"/>
    <property type="molecule type" value="Genomic_DNA"/>
</dbReference>
<dbReference type="EMBL" id="AY256468">
    <property type="protein sequence ID" value="AAP82465.1"/>
    <property type="molecule type" value="Genomic_DNA"/>
</dbReference>
<dbReference type="EMBL" id="AY256469">
    <property type="protein sequence ID" value="AAP82466.1"/>
    <property type="molecule type" value="Genomic_DNA"/>
</dbReference>
<dbReference type="EMBL" id="BT007177">
    <property type="protein sequence ID" value="AAP35841.1"/>
    <property type="molecule type" value="mRNA"/>
</dbReference>
<dbReference type="EMBL" id="AL049767">
    <property type="status" value="NOT_ANNOTATED_CDS"/>
    <property type="molecule type" value="Genomic_DNA"/>
</dbReference>
<dbReference type="EMBL" id="CH471077">
    <property type="protein sequence ID" value="EAW75871.1"/>
    <property type="molecule type" value="Genomic_DNA"/>
</dbReference>
<dbReference type="EMBL" id="BC007096">
    <property type="protein sequence ID" value="AAH07096.1"/>
    <property type="molecule type" value="mRNA"/>
</dbReference>
<dbReference type="EMBL" id="BC055416">
    <property type="protein sequence ID" value="AAH55416.1"/>
    <property type="molecule type" value="mRNA"/>
</dbReference>
<dbReference type="EMBL" id="AY174423">
    <property type="protein sequence ID" value="AAO20112.1"/>
    <property type="molecule type" value="Genomic_DNA"/>
</dbReference>
<dbReference type="EMBL" id="AY174424">
    <property type="protein sequence ID" value="AAO20113.1"/>
    <property type="molecule type" value="Genomic_DNA"/>
</dbReference>
<dbReference type="EMBL" id="AY174437">
    <property type="protein sequence ID" value="AAO20126.1"/>
    <property type="molecule type" value="Genomic_DNA"/>
</dbReference>
<dbReference type="CCDS" id="CCDS13345.1">
    <molecule id="P04279-1"/>
</dbReference>
<dbReference type="PIR" id="B43412">
    <property type="entry name" value="WTHUB"/>
</dbReference>
<dbReference type="RefSeq" id="NP_002998.1">
    <molecule id="P04279-1"/>
    <property type="nucleotide sequence ID" value="NM_003007.5"/>
</dbReference>
<dbReference type="PDB" id="7ZRF">
    <property type="method" value="NMR"/>
    <property type="chains" value="A=68-85"/>
</dbReference>
<dbReference type="PDB" id="7ZRO">
    <property type="method" value="NMR"/>
    <property type="chains" value="A=68-107"/>
</dbReference>
<dbReference type="PDB" id="8BOO">
    <property type="method" value="NMR"/>
    <property type="chains" value="A=45-67"/>
</dbReference>
<dbReference type="PDB" id="8BVZ">
    <property type="method" value="NMR"/>
    <property type="chains" value="A=49-67"/>
</dbReference>
<dbReference type="PDBsum" id="7ZRF"/>
<dbReference type="PDBsum" id="7ZRO"/>
<dbReference type="PDBsum" id="8BOO"/>
<dbReference type="PDBsum" id="8BVZ"/>
<dbReference type="SMR" id="P04279"/>
<dbReference type="BioGRID" id="112306">
    <property type="interactions" value="111"/>
</dbReference>
<dbReference type="FunCoup" id="P04279">
    <property type="interactions" value="305"/>
</dbReference>
<dbReference type="IntAct" id="P04279">
    <property type="interactions" value="67"/>
</dbReference>
<dbReference type="MINT" id="P04279"/>
<dbReference type="STRING" id="9606.ENSP00000361867"/>
<dbReference type="DrugBank" id="DB01593">
    <property type="generic name" value="Zinc"/>
</dbReference>
<dbReference type="DrugBank" id="DB14487">
    <property type="generic name" value="Zinc acetate"/>
</dbReference>
<dbReference type="DrugBank" id="DB14533">
    <property type="generic name" value="Zinc chloride"/>
</dbReference>
<dbReference type="DrugBank" id="DB14548">
    <property type="generic name" value="Zinc sulfate, unspecified form"/>
</dbReference>
<dbReference type="GlyGen" id="P04279">
    <property type="glycosylation" value="1 site, 1 O-linked glycan (1 site)"/>
</dbReference>
<dbReference type="iPTMnet" id="P04279"/>
<dbReference type="PhosphoSitePlus" id="P04279"/>
<dbReference type="BioMuta" id="SEMG1"/>
<dbReference type="DMDM" id="134426"/>
<dbReference type="jPOST" id="P04279"/>
<dbReference type="MassIVE" id="P04279"/>
<dbReference type="PaxDb" id="9606-ENSP00000361867"/>
<dbReference type="PeptideAtlas" id="P04279"/>
<dbReference type="ProteomicsDB" id="51699">
    <molecule id="P04279-1"/>
</dbReference>
<dbReference type="ProteomicsDB" id="51700">
    <molecule id="P04279-2"/>
</dbReference>
<dbReference type="Pumba" id="P04279"/>
<dbReference type="Antibodypedia" id="12686">
    <property type="antibodies" value="231 antibodies from 29 providers"/>
</dbReference>
<dbReference type="DNASU" id="6406"/>
<dbReference type="Ensembl" id="ENST00000372781.4">
    <molecule id="P04279-1"/>
    <property type="protein sequence ID" value="ENSP00000361867.3"/>
    <property type="gene ID" value="ENSG00000124233.12"/>
</dbReference>
<dbReference type="GeneID" id="6406"/>
<dbReference type="KEGG" id="hsa:6406"/>
<dbReference type="MANE-Select" id="ENST00000372781.4">
    <property type="protein sequence ID" value="ENSP00000361867.3"/>
    <property type="RefSeq nucleotide sequence ID" value="NM_003007.5"/>
    <property type="RefSeq protein sequence ID" value="NP_002998.1"/>
</dbReference>
<dbReference type="UCSC" id="uc002xni.3">
    <molecule id="P04279-1"/>
    <property type="organism name" value="human"/>
</dbReference>
<dbReference type="AGR" id="HGNC:10742"/>
<dbReference type="CTD" id="6406"/>
<dbReference type="DisGeNET" id="6406"/>
<dbReference type="GeneCards" id="SEMG1"/>
<dbReference type="HGNC" id="HGNC:10742">
    <property type="gene designation" value="SEMG1"/>
</dbReference>
<dbReference type="HPA" id="ENSG00000124233">
    <property type="expression patterns" value="Tissue enriched (seminal)"/>
</dbReference>
<dbReference type="MIM" id="182140">
    <property type="type" value="gene"/>
</dbReference>
<dbReference type="neXtProt" id="NX_P04279"/>
<dbReference type="OpenTargets" id="ENSG00000124233"/>
<dbReference type="PharmGKB" id="PA35664"/>
<dbReference type="VEuPathDB" id="HostDB:ENSG00000124233"/>
<dbReference type="eggNOG" id="ENOG502T80H">
    <property type="taxonomic scope" value="Eukaryota"/>
</dbReference>
<dbReference type="GeneTree" id="ENSGT00940000162560"/>
<dbReference type="HOGENOM" id="CLU_034710_0_0_1"/>
<dbReference type="InParanoid" id="P04279"/>
<dbReference type="OMA" id="QRHNYDR"/>
<dbReference type="OrthoDB" id="9536562at2759"/>
<dbReference type="PAN-GO" id="P04279">
    <property type="GO annotations" value="1 GO annotation based on evolutionary models"/>
</dbReference>
<dbReference type="PhylomeDB" id="P04279"/>
<dbReference type="TreeFam" id="TF342360"/>
<dbReference type="PathwayCommons" id="P04279"/>
<dbReference type="Reactome" id="R-HSA-6803157">
    <property type="pathway name" value="Antimicrobial peptides"/>
</dbReference>
<dbReference type="Reactome" id="R-HSA-977225">
    <property type="pathway name" value="Amyloid fiber formation"/>
</dbReference>
<dbReference type="SignaLink" id="P04279"/>
<dbReference type="BioGRID-ORCS" id="6406">
    <property type="hits" value="11 hits in 1135 CRISPR screens"/>
</dbReference>
<dbReference type="ChiTaRS" id="SEMG1">
    <property type="organism name" value="human"/>
</dbReference>
<dbReference type="GeneWiki" id="Semenogelin_I"/>
<dbReference type="GenomeRNAi" id="6406"/>
<dbReference type="Pharos" id="P04279">
    <property type="development level" value="Tbio"/>
</dbReference>
<dbReference type="PRO" id="PR:P04279"/>
<dbReference type="Proteomes" id="UP000005640">
    <property type="component" value="Chromosome 20"/>
</dbReference>
<dbReference type="RNAct" id="P04279">
    <property type="molecule type" value="protein"/>
</dbReference>
<dbReference type="Bgee" id="ENSG00000124233">
    <property type="expression patterns" value="Expressed in seminal vesicle and 65 other cell types or tissues"/>
</dbReference>
<dbReference type="GO" id="GO:0070062">
    <property type="term" value="C:extracellular exosome"/>
    <property type="evidence" value="ECO:0007005"/>
    <property type="project" value="UniProtKB"/>
</dbReference>
<dbReference type="GO" id="GO:0005576">
    <property type="term" value="C:extracellular region"/>
    <property type="evidence" value="ECO:0000304"/>
    <property type="project" value="Reactome"/>
</dbReference>
<dbReference type="GO" id="GO:0005615">
    <property type="term" value="C:extracellular space"/>
    <property type="evidence" value="ECO:0000314"/>
    <property type="project" value="UniProtKB"/>
</dbReference>
<dbReference type="GO" id="GO:0005634">
    <property type="term" value="C:nucleus"/>
    <property type="evidence" value="ECO:0007005"/>
    <property type="project" value="UniProtKB"/>
</dbReference>
<dbReference type="GO" id="GO:0032991">
    <property type="term" value="C:protein-containing complex"/>
    <property type="evidence" value="ECO:0000314"/>
    <property type="project" value="UniProtKB"/>
</dbReference>
<dbReference type="GO" id="GO:0008270">
    <property type="term" value="F:zinc ion binding"/>
    <property type="evidence" value="ECO:0000315"/>
    <property type="project" value="UniProtKB"/>
</dbReference>
<dbReference type="GO" id="GO:0019731">
    <property type="term" value="P:antibacterial humoral response"/>
    <property type="evidence" value="ECO:0000314"/>
    <property type="project" value="UniProtKB"/>
</dbReference>
<dbReference type="GO" id="GO:0061844">
    <property type="term" value="P:antimicrobial humoral immune response mediated by antimicrobial peptide"/>
    <property type="evidence" value="ECO:0000314"/>
    <property type="project" value="UniProtKB"/>
</dbReference>
<dbReference type="GO" id="GO:0050817">
    <property type="term" value="P:coagulation"/>
    <property type="evidence" value="ECO:0000314"/>
    <property type="project" value="UniProtKB"/>
</dbReference>
<dbReference type="GO" id="GO:0007320">
    <property type="term" value="P:insemination"/>
    <property type="evidence" value="ECO:0000304"/>
    <property type="project" value="UniProtKB"/>
</dbReference>
<dbReference type="GO" id="GO:0031640">
    <property type="term" value="P:killing of cells of another organism"/>
    <property type="evidence" value="ECO:0000314"/>
    <property type="project" value="UniProtKB"/>
</dbReference>
<dbReference type="GO" id="GO:0090281">
    <property type="term" value="P:negative regulation of calcium ion import"/>
    <property type="evidence" value="ECO:0000314"/>
    <property type="project" value="CACAO"/>
</dbReference>
<dbReference type="GO" id="GO:1901318">
    <property type="term" value="P:negative regulation of flagellated sperm motility"/>
    <property type="evidence" value="ECO:0000314"/>
    <property type="project" value="CACAO"/>
</dbReference>
<dbReference type="GO" id="GO:1900005">
    <property type="term" value="P:positive regulation of serine-type endopeptidase activity"/>
    <property type="evidence" value="ECO:0000315"/>
    <property type="project" value="UniProtKB"/>
</dbReference>
<dbReference type="GO" id="GO:0048240">
    <property type="term" value="P:sperm capacitation"/>
    <property type="evidence" value="ECO:0000318"/>
    <property type="project" value="GO_Central"/>
</dbReference>
<dbReference type="InterPro" id="IPR008836">
    <property type="entry name" value="Semenogelin"/>
</dbReference>
<dbReference type="PANTHER" id="PTHR10547:SF4">
    <property type="entry name" value="SEMENOGELIN-1"/>
    <property type="match status" value="1"/>
</dbReference>
<dbReference type="PANTHER" id="PTHR10547">
    <property type="entry name" value="SEMENOGELIN/SEMINAL VESICLE SECRETORY PROTEIN"/>
    <property type="match status" value="1"/>
</dbReference>
<dbReference type="Pfam" id="PF05474">
    <property type="entry name" value="Semenogelin"/>
    <property type="match status" value="2"/>
</dbReference>
<name>SEMG1_HUMAN</name>
<sequence>MKPNIIFVLSLLLILEKQAAVMGQKGGSKGRLPSEFSQFPHGQKGQHYSGQKGKQQTESKGSFSIQYTYHVDANDHDQSRKSQQYDLNALHKTTKSQRHLGGSQQLLHNKQEGRDHDKSKGHFHRVVIHHKGGKAHRGTQNPSQDQGNSPSGKGISSQYSNTEERLWVHGLSKEQTSVSGAQKGRKQGGSQSSYVLQTEELVANKQQRETKNSHQNKGHYQNVVEVREEHSSKVQTSLCPAHQDKLQHGSKDIFSTQDELLVYNKNQHQTKNLNQDQQHGRKANKISYQSSSTEERRLHYGENGVQKDVSQSSIYSQTEEKAQGKSQKQITIPSQEQEHSQKANKISYQSSSTEERRLHYGENGVQKDVSQRSIYSQTEKLVAGKSQIQAPNPKQEPWHGENAKGESGQSTNREQDLLSHEQKGRHQHGSHGGLDIVIIEQEDDSDRHLAQHLNNDRNPLFT</sequence>
<accession>P04279</accession>
<accession>Q53ZV0</accession>
<accession>Q53ZV1</accession>
<accession>Q53ZV2</accession>
<accession>Q6X4I9</accession>
<accession>Q6Y809</accession>
<accession>Q6Y822</accession>
<accession>Q6Y823</accession>
<accession>Q86U64</accession>
<accession>Q96QM3</accession>
<organism>
    <name type="scientific">Homo sapiens</name>
    <name type="common">Human</name>
    <dbReference type="NCBI Taxonomy" id="9606"/>
    <lineage>
        <taxon>Eukaryota</taxon>
        <taxon>Metazoa</taxon>
        <taxon>Chordata</taxon>
        <taxon>Craniata</taxon>
        <taxon>Vertebrata</taxon>
        <taxon>Euteleostomi</taxon>
        <taxon>Mammalia</taxon>
        <taxon>Eutheria</taxon>
        <taxon>Euarchontoglires</taxon>
        <taxon>Primates</taxon>
        <taxon>Haplorrhini</taxon>
        <taxon>Catarrhini</taxon>
        <taxon>Hominidae</taxon>
        <taxon>Homo</taxon>
    </lineage>
</organism>
<feature type="signal peptide">
    <location>
        <begin position="1"/>
        <end position="23"/>
    </location>
</feature>
<feature type="chain" id="PRO_0000032351" description="Semenogelin-1">
    <location>
        <begin position="24"/>
        <end position="462"/>
    </location>
</feature>
<feature type="peptide" id="PRO_0000032352" description="Alpha-inhibin-92">
    <location>
        <begin position="68"/>
        <end position="159"/>
    </location>
</feature>
<feature type="peptide" id="PRO_0000032353" description="Seminal basic protein">
    <location>
        <begin position="108"/>
        <end position="159"/>
    </location>
</feature>
<feature type="peptide" id="PRO_0000032354" description="Alpha-inhibin-31">
    <location>
        <begin position="108"/>
        <end position="138"/>
    </location>
</feature>
<feature type="repeat" description="3-1">
    <location>
        <begin position="70"/>
        <end position="129"/>
    </location>
</feature>
<feature type="repeat" description="2-1">
    <location>
        <begin position="141"/>
        <end position="200"/>
    </location>
</feature>
<feature type="repeat" description="2-2">
    <location>
        <begin position="201"/>
        <end position="260"/>
    </location>
</feature>
<feature type="repeat" description="3-2">
    <location>
        <begin position="381"/>
        <end position="439"/>
    </location>
</feature>
<feature type="region of interest" description="Disordered" evidence="2">
    <location>
        <begin position="24"/>
        <end position="61"/>
    </location>
</feature>
<feature type="region of interest" description="Repeat-rich region" evidence="1">
    <location>
        <begin position="70"/>
        <end position="439"/>
    </location>
</feature>
<feature type="region of interest" description="Disordered" evidence="2">
    <location>
        <begin position="131"/>
        <end position="157"/>
    </location>
</feature>
<feature type="region of interest" description="Interaction with EPPIN" evidence="5">
    <location>
        <begin position="164"/>
        <end position="283"/>
    </location>
</feature>
<feature type="region of interest" description="Disordered" evidence="2">
    <location>
        <begin position="173"/>
        <end position="194"/>
    </location>
</feature>
<feature type="region of interest" description="2 X 60 AA tandem repeats, type 1">
    <location>
        <begin position="261"/>
        <end position="380"/>
    </location>
</feature>
<feature type="region of interest" description="Disordered" evidence="2">
    <location>
        <begin position="270"/>
        <end position="432"/>
    </location>
</feature>
<feature type="compositionally biased region" description="Polar residues" evidence="2">
    <location>
        <begin position="46"/>
        <end position="61"/>
    </location>
</feature>
<feature type="compositionally biased region" description="Polar residues" evidence="2">
    <location>
        <begin position="138"/>
        <end position="157"/>
    </location>
</feature>
<feature type="compositionally biased region" description="Polar residues" evidence="2">
    <location>
        <begin position="308"/>
        <end position="317"/>
    </location>
</feature>
<feature type="compositionally biased region" description="Polar residues" evidence="2">
    <location>
        <begin position="324"/>
        <end position="335"/>
    </location>
</feature>
<feature type="compositionally biased region" description="Polar residues" evidence="2">
    <location>
        <begin position="343"/>
        <end position="352"/>
    </location>
</feature>
<feature type="compositionally biased region" description="Basic and acidic residues" evidence="2">
    <location>
        <begin position="413"/>
        <end position="424"/>
    </location>
</feature>
<feature type="modified residue" description="Pyrrolidone carboxylic acid" evidence="11">
    <location>
        <position position="24"/>
    </location>
</feature>
<feature type="disulfide bond" description="Interchain">
    <location>
        <position position="239"/>
    </location>
</feature>
<feature type="splice variant" id="VSP_004385" description="In isoform 2." evidence="8 9">
    <location>
        <begin position="312"/>
        <end position="371"/>
    </location>
</feature>
<feature type="sequence variant" id="VAR_053650" description="In dbSNP:rs11559137.">
    <original>E</original>
    <variation>G</variation>
    <location>
        <position position="58"/>
    </location>
</feature>
<feature type="sequence variant" id="VAR_005610" description="Less common genetic variant; dbSNP:rs2301366." evidence="3 4">
    <original>S</original>
    <variation>T</variation>
    <location>
        <position position="79"/>
    </location>
</feature>
<feature type="sequence variant" id="VAR_053651" description="In dbSNP:rs2233884.">
    <original>H</original>
    <variation>R</variation>
    <location>
        <position position="108"/>
    </location>
</feature>
<feature type="sequence variant" id="VAR_022679" description="In dbSNP:rs2233887." evidence="4">
    <original>R</original>
    <variation>L</variation>
    <location>
        <position position="372"/>
    </location>
</feature>
<feature type="mutagenesis site" description="Abrogates binding to EPPIN and do not inhibit spem motility." evidence="7">
    <original>C</original>
    <variation>G</variation>
    <location>
        <position position="239"/>
    </location>
</feature>
<feature type="sequence conflict" description="In Ref. 3; AAP82463." evidence="10" ref="3">
    <original>L</original>
    <variation>Q</variation>
    <location>
        <position position="100"/>
    </location>
</feature>
<feature type="sequence conflict" description="In Ref. 8; AAO20112/AAO20113." evidence="10" ref="8">
    <original>QTS</original>
    <variation>LRT</variation>
    <location>
        <begin position="235"/>
        <end position="237"/>
    </location>
</feature>
<feature type="sequence conflict" description="In Ref. 12; AA sequence." evidence="10" ref="12">
    <original>K</original>
    <variation>L</variation>
    <location>
        <position position="321"/>
    </location>
</feature>
<feature type="sequence conflict" description="In Ref. 2; CAA87636/AAA18168." evidence="10" ref="2">
    <original>K</original>
    <variation>N</variation>
    <location>
        <position position="423"/>
    </location>
</feature>
<feature type="sequence conflict" description="In Ref. 4 and 7." evidence="10" ref="4 7">
    <original>R</original>
    <variation>Q</variation>
    <location>
        <position position="457"/>
    </location>
</feature>
<feature type="strand" evidence="14">
    <location>
        <begin position="52"/>
        <end position="56"/>
    </location>
</feature>
<feature type="helix" evidence="14">
    <location>
        <begin position="58"/>
        <end position="61"/>
    </location>
</feature>
<feature type="strand" evidence="12">
    <location>
        <begin position="76"/>
        <end position="78"/>
    </location>
</feature>
<feature type="helix" evidence="13">
    <location>
        <begin position="82"/>
        <end position="84"/>
    </location>
</feature>
<feature type="helix" evidence="13">
    <location>
        <begin position="94"/>
        <end position="96"/>
    </location>
</feature>
<protein>
    <recommendedName>
        <fullName>Semenogelin-1</fullName>
    </recommendedName>
    <alternativeName>
        <fullName>Cancer/testis antigen 103</fullName>
    </alternativeName>
    <alternativeName>
        <fullName>Semenogelin I</fullName>
        <shortName>SGI</shortName>
    </alternativeName>
    <component>
        <recommendedName>
            <fullName>Alpha-inhibin-92</fullName>
        </recommendedName>
    </component>
    <component>
        <recommendedName>
            <fullName>Alpha-inhibin-31</fullName>
        </recommendedName>
    </component>
    <component>
        <recommendedName>
            <fullName>Seminal basic protein</fullName>
        </recommendedName>
    </component>
</protein>
<reference key="1">
    <citation type="journal article" date="1989" name="J. Biol. Chem.">
        <title>Semenogelin, the predominant protein in human semen. Primary structure and identification of closely related proteins in the male accessory sex glands and on the spermatozoa.</title>
        <authorList>
            <person name="Lilja H."/>
            <person name="Abrahamsson P.-A."/>
            <person name="Lundwall A."/>
        </authorList>
    </citation>
    <scope>NUCLEOTIDE SEQUENCE [MRNA] (ISOFORM 1)</scope>
    <scope>PYROGLUTAMATE FORMATION AT GLN-24</scope>
</reference>
<reference key="2">
    <citation type="journal article" date="1992" name="J. Biol. Chem.">
        <title>Gene structure of semenogelin I and II. The predominant proteins in human semen are encoded by two homologous genes on chromosome 20.</title>
        <authorList>
            <person name="Ulvsbaeck M."/>
            <person name="Lazure C."/>
            <person name="Lilja H."/>
            <person name="Spurr N.K."/>
            <person name="Rao V.V."/>
            <person name="Loeffler C."/>
            <person name="Hansmann I."/>
            <person name="Lundwall A."/>
        </authorList>
    </citation>
    <scope>NUCLEOTIDE SEQUENCE [GENOMIC DNA]</scope>
    <source>
        <tissue>Blood</tissue>
    </source>
</reference>
<reference key="3">
    <citation type="journal article" date="2003" name="J. Mol. Evol.">
        <title>Evolution of the hominoid semenogelin genes, the major proteins of ejaculated semen.</title>
        <authorList>
            <person name="Jensen-Seaman M.I."/>
            <person name="Li W.-H."/>
        </authorList>
    </citation>
    <scope>NUCLEOTIDE SEQUENCE [GENOMIC DNA]</scope>
    <scope>VARIANTS THR-79 AND LEU-372</scope>
</reference>
<reference key="4">
    <citation type="submission" date="2003-05" db="EMBL/GenBank/DDBJ databases">
        <title>Cloning of human full-length CDSs in BD Creator(TM) system donor vector.</title>
        <authorList>
            <person name="Kalnine N."/>
            <person name="Chen X."/>
            <person name="Rolfs A."/>
            <person name="Halleck A."/>
            <person name="Hines L."/>
            <person name="Eisenstein S."/>
            <person name="Koundinya M."/>
            <person name="Raphael J."/>
            <person name="Moreira D."/>
            <person name="Kelley T."/>
            <person name="LaBaer J."/>
            <person name="Lin Y."/>
            <person name="Phelan M."/>
            <person name="Farmer A."/>
        </authorList>
    </citation>
    <scope>NUCLEOTIDE SEQUENCE [LARGE SCALE MRNA] (ISOFORM 2)</scope>
</reference>
<reference key="5">
    <citation type="journal article" date="2001" name="Nature">
        <title>The DNA sequence and comparative analysis of human chromosome 20.</title>
        <authorList>
            <person name="Deloukas P."/>
            <person name="Matthews L.H."/>
            <person name="Ashurst J.L."/>
            <person name="Burton J."/>
            <person name="Gilbert J.G.R."/>
            <person name="Jones M."/>
            <person name="Stavrides G."/>
            <person name="Almeida J.P."/>
            <person name="Babbage A.K."/>
            <person name="Bagguley C.L."/>
            <person name="Bailey J."/>
            <person name="Barlow K.F."/>
            <person name="Bates K.N."/>
            <person name="Beard L.M."/>
            <person name="Beare D.M."/>
            <person name="Beasley O.P."/>
            <person name="Bird C.P."/>
            <person name="Blakey S.E."/>
            <person name="Bridgeman A.M."/>
            <person name="Brown A.J."/>
            <person name="Buck D."/>
            <person name="Burrill W.D."/>
            <person name="Butler A.P."/>
            <person name="Carder C."/>
            <person name="Carter N.P."/>
            <person name="Chapman J.C."/>
            <person name="Clamp M."/>
            <person name="Clark G."/>
            <person name="Clark L.N."/>
            <person name="Clark S.Y."/>
            <person name="Clee C.M."/>
            <person name="Clegg S."/>
            <person name="Cobley V.E."/>
            <person name="Collier R.E."/>
            <person name="Connor R.E."/>
            <person name="Corby N.R."/>
            <person name="Coulson A."/>
            <person name="Coville G.J."/>
            <person name="Deadman R."/>
            <person name="Dhami P.D."/>
            <person name="Dunn M."/>
            <person name="Ellington A.G."/>
            <person name="Frankland J.A."/>
            <person name="Fraser A."/>
            <person name="French L."/>
            <person name="Garner P."/>
            <person name="Grafham D.V."/>
            <person name="Griffiths C."/>
            <person name="Griffiths M.N.D."/>
            <person name="Gwilliam R."/>
            <person name="Hall R.E."/>
            <person name="Hammond S."/>
            <person name="Harley J.L."/>
            <person name="Heath P.D."/>
            <person name="Ho S."/>
            <person name="Holden J.L."/>
            <person name="Howden P.J."/>
            <person name="Huckle E."/>
            <person name="Hunt A.R."/>
            <person name="Hunt S.E."/>
            <person name="Jekosch K."/>
            <person name="Johnson C.M."/>
            <person name="Johnson D."/>
            <person name="Kay M.P."/>
            <person name="Kimberley A.M."/>
            <person name="King A."/>
            <person name="Knights A."/>
            <person name="Laird G.K."/>
            <person name="Lawlor S."/>
            <person name="Lehvaeslaiho M.H."/>
            <person name="Leversha M.A."/>
            <person name="Lloyd C."/>
            <person name="Lloyd D.M."/>
            <person name="Lovell J.D."/>
            <person name="Marsh V.L."/>
            <person name="Martin S.L."/>
            <person name="McConnachie L.J."/>
            <person name="McLay K."/>
            <person name="McMurray A.A."/>
            <person name="Milne S.A."/>
            <person name="Mistry D."/>
            <person name="Moore M.J.F."/>
            <person name="Mullikin J.C."/>
            <person name="Nickerson T."/>
            <person name="Oliver K."/>
            <person name="Parker A."/>
            <person name="Patel R."/>
            <person name="Pearce T.A.V."/>
            <person name="Peck A.I."/>
            <person name="Phillimore B.J.C.T."/>
            <person name="Prathalingam S.R."/>
            <person name="Plumb R.W."/>
            <person name="Ramsay H."/>
            <person name="Rice C.M."/>
            <person name="Ross M.T."/>
            <person name="Scott C.E."/>
            <person name="Sehra H.K."/>
            <person name="Shownkeen R."/>
            <person name="Sims S."/>
            <person name="Skuce C.D."/>
            <person name="Smith M.L."/>
            <person name="Soderlund C."/>
            <person name="Steward C.A."/>
            <person name="Sulston J.E."/>
            <person name="Swann R.M."/>
            <person name="Sycamore N."/>
            <person name="Taylor R."/>
            <person name="Tee L."/>
            <person name="Thomas D.W."/>
            <person name="Thorpe A."/>
            <person name="Tracey A."/>
            <person name="Tromans A.C."/>
            <person name="Vaudin M."/>
            <person name="Wall M."/>
            <person name="Wallis J.M."/>
            <person name="Whitehead S.L."/>
            <person name="Whittaker P."/>
            <person name="Willey D.L."/>
            <person name="Williams L."/>
            <person name="Williams S.A."/>
            <person name="Wilming L."/>
            <person name="Wray P.W."/>
            <person name="Hubbard T."/>
            <person name="Durbin R.M."/>
            <person name="Bentley D.R."/>
            <person name="Beck S."/>
            <person name="Rogers J."/>
        </authorList>
    </citation>
    <scope>NUCLEOTIDE SEQUENCE [LARGE SCALE GENOMIC DNA]</scope>
</reference>
<reference key="6">
    <citation type="submission" date="2005-09" db="EMBL/GenBank/DDBJ databases">
        <authorList>
            <person name="Mural R.J."/>
            <person name="Istrail S."/>
            <person name="Sutton G.G."/>
            <person name="Florea L."/>
            <person name="Halpern A.L."/>
            <person name="Mobarry C.M."/>
            <person name="Lippert R."/>
            <person name="Walenz B."/>
            <person name="Shatkay H."/>
            <person name="Dew I."/>
            <person name="Miller J.R."/>
            <person name="Flanigan M.J."/>
            <person name="Edwards N.J."/>
            <person name="Bolanos R."/>
            <person name="Fasulo D."/>
            <person name="Halldorsson B.V."/>
            <person name="Hannenhalli S."/>
            <person name="Turner R."/>
            <person name="Yooseph S."/>
            <person name="Lu F."/>
            <person name="Nusskern D.R."/>
            <person name="Shue B.C."/>
            <person name="Zheng X.H."/>
            <person name="Zhong F."/>
            <person name="Delcher A.L."/>
            <person name="Huson D.H."/>
            <person name="Kravitz S.A."/>
            <person name="Mouchard L."/>
            <person name="Reinert K."/>
            <person name="Remington K.A."/>
            <person name="Clark A.G."/>
            <person name="Waterman M.S."/>
            <person name="Eichler E.E."/>
            <person name="Adams M.D."/>
            <person name="Hunkapiller M.W."/>
            <person name="Myers E.W."/>
            <person name="Venter J.C."/>
        </authorList>
    </citation>
    <scope>NUCLEOTIDE SEQUENCE [LARGE SCALE GENOMIC DNA]</scope>
</reference>
<reference key="7">
    <citation type="journal article" date="2004" name="Genome Res.">
        <title>The status, quality, and expansion of the NIH full-length cDNA project: the Mammalian Gene Collection (MGC).</title>
        <authorList>
            <consortium name="The MGC Project Team"/>
        </authorList>
    </citation>
    <scope>NUCLEOTIDE SEQUENCE [LARGE SCALE MRNA] (ISOFORM 2)</scope>
    <source>
        <tissue>Prostate</tissue>
    </source>
</reference>
<reference key="8">
    <citation type="journal article" date="2003" name="J. Mol. Evol.">
        <title>Reduced polymorphism in the chimpanzee semen coagulating protein, semenogelin I.</title>
        <authorList>
            <person name="Kingan S.B."/>
            <person name="Tatar M."/>
            <person name="Rand D.M."/>
        </authorList>
    </citation>
    <scope>NUCLEOTIDE SEQUENCE [GENOMIC DNA] OF 62-237 AND 241-449</scope>
    <scope>VARIANT THR-79</scope>
</reference>
<reference key="9">
    <citation type="journal article" date="1985" name="FEBS Lett.">
        <title>Amino acid sequence of the predominant basic protein in human seminal plasma.</title>
        <authorList>
            <person name="Lilja H."/>
            <person name="Jeppsson J.-O."/>
        </authorList>
    </citation>
    <scope>PROTEIN SEQUENCE OF 108-159</scope>
</reference>
<reference key="10">
    <citation type="journal article" date="1984" name="FEBS Lett.">
        <title>Partial amino acid sequence of a human seminal plasma peptide with inhibin-like activity.</title>
        <authorList>
            <person name="Seidah N.G."/>
            <person name="Ramasharma K."/>
            <person name="Sairam M.R."/>
            <person name="Chretien M."/>
        </authorList>
    </citation>
    <scope>PROTEIN SEQUENCE OF 108-138</scope>
</reference>
<reference key="11">
    <citation type="journal article" date="1984" name="Science">
        <title>Isolation, structure, and synthesis of a human seminal plasma peptide with inhibin-like activity.</title>
        <authorList>
            <person name="Ramasharma K."/>
            <person name="Sairam M.R."/>
            <person name="Seidah N.G."/>
            <person name="Chretien M."/>
            <person name="Manjunath P."/>
            <person name="Schiller P.W."/>
            <person name="Yamashiro D."/>
            <person name="Li C.H."/>
        </authorList>
    </citation>
    <scope>PROTEIN SEQUENCE OF 108-138</scope>
</reference>
<reference key="12">
    <citation type="journal article" date="1989" name="Biol. Chem. Hoppe-Seyler">
        <title>Isolation and structure determination of two peptides occurring in human seminal plasma.</title>
        <authorList>
            <person name="Schneider K."/>
            <person name="Kausler W."/>
            <person name="Tripier D."/>
            <person name="Jouvenal K."/>
            <person name="Spiteller G."/>
        </authorList>
    </citation>
    <scope>PROTEIN SEQUENCE OF 316-344</scope>
</reference>
<reference key="13">
    <citation type="journal article" date="1993" name="Eur. J. Biochem.">
        <title>Isolation and identification of N-terminally extended forms of 5-oxoprolylglutamylprolinamide (Glp-Glu-Pro-NH2), a thyrotropin-releasing-hormone (TRH)-like peptide present in human semen.</title>
        <authorList>
            <person name="Khan Z."/>
            <person name="Smyth D.G."/>
        </authorList>
    </citation>
    <scope>PROTEIN SEQUENCE OF 373-397</scope>
</reference>
<reference key="14">
    <citation type="journal article" date="1985" name="Proc. Natl. Acad. Sci. U.S.A.">
        <title>Human seminal alpha inhibins: isolation, characterization, and structure.</title>
        <authorList>
            <person name="Li C.H."/>
            <person name="Hammonds R.G."/>
            <person name="Ramasharma K."/>
            <person name="Chung D."/>
        </authorList>
    </citation>
    <scope>PROTEIN SEQUENCE OF 68-159</scope>
</reference>
<reference key="15">
    <citation type="journal article" date="1999" name="Cell. Mol. Life Sci.">
        <title>Semenogelin I: a coagulum forming, multifunctional seminal vesicle protein.</title>
        <authorList>
            <person name="Robert M."/>
            <person name="Gagnon C."/>
        </authorList>
    </citation>
    <scope>REVIEW</scope>
</reference>
<reference key="16">
    <citation type="journal article" date="2005" name="Biol. Reprod.">
        <title>Association of eppin with semenogelin on human spermatozoa.</title>
        <authorList>
            <person name="Wang Z."/>
            <person name="Widgren E.E."/>
            <person name="Sivashanmugam P."/>
            <person name="O'Rand M.G."/>
            <person name="Richardson R.T."/>
        </authorList>
    </citation>
    <scope>INTERACTION WITH EPPIN</scope>
</reference>
<reference key="17">
    <citation type="journal article" date="2007" name="Biol. Reprod.">
        <title>Characterization of an eppin protein complex from human semen and spermatozoa.</title>
        <authorList>
            <person name="Wang Z."/>
            <person name="Widgren E.E."/>
            <person name="Richardson R.T."/>
            <person name="O'Rand M.G."/>
        </authorList>
    </citation>
    <scope>IDENTIFICATION IN A COMPLEX WITH LTF; CLU AND EPPIN</scope>
</reference>
<reference key="18">
    <citation type="journal article" date="2010" name="Biol. Reprod.">
        <title>Analysis of recombinant human semenogelin as an inhibitor of human sperm motility.</title>
        <authorList>
            <person name="Mitra A."/>
            <person name="Richardson R.T."/>
            <person name="O'Rand M.G."/>
        </authorList>
    </citation>
    <scope>FUNCTION</scope>
    <scope>MUTAGENESIS OF CYS-239</scope>
</reference>
<proteinExistence type="evidence at protein level"/>
<comment type="function">
    <text evidence="7">Predominant protein in semen. It participates in the formation of a gel matrix entrapping the accessory gland secretions and ejaculated spermatozoa. Fragments of semenogelin and/or fragments of the related proteins may contribute to the activation of progressive sperm movements as the gel-forming proteins are fragmented by KLK3/PSA.</text>
</comment>
<comment type="function">
    <text evidence="7">Alpha-inhibin-92 and alpha-inhibin-31, derived from the proteolytic degradation of semenogelin, inhibit the secretion of pituitary follicle-stimulating hormone.</text>
</comment>
<comment type="subunit">
    <text evidence="5 6">Occurs in disulfide-linked complexes which may also contain two less abundant 71- and 76-kDa semenogelin-related polypeptides. Interacts with EPPIN (via C-terminus); Cys-239 is a critical amino acid for both binding to EPPIN.</text>
</comment>
<comment type="interaction">
    <interactant intactId="EBI-953955">
        <id>P04279</id>
    </interactant>
    <interactant intactId="EBI-10263496">
        <id>Q8IYK4</id>
        <label>COLGALT2</label>
    </interactant>
    <organismsDiffer>false</organismsDiffer>
    <experiments>2</experiments>
</comment>
<comment type="interaction">
    <interactant intactId="EBI-953955">
        <id>P04279</id>
    </interactant>
    <interactant intactId="EBI-310727">
        <id>Q6N021</id>
        <label>TET2</label>
    </interactant>
    <organismsDiffer>false</organismsDiffer>
    <experiments>2</experiments>
</comment>
<comment type="interaction">
    <interactant intactId="EBI-12272118">
        <id>P04279-2</id>
    </interactant>
    <interactant intactId="EBI-769261">
        <id>Q96JC9</id>
        <label>EAF1</label>
    </interactant>
    <organismsDiffer>false</organismsDiffer>
    <experiments>3</experiments>
</comment>
<comment type="interaction">
    <interactant intactId="EBI-12272118">
        <id>P04279-2</id>
    </interactant>
    <interactant intactId="EBI-947187">
        <id>Q9UHD9</id>
        <label>UBQLN2</label>
    </interactant>
    <organismsDiffer>false</organismsDiffer>
    <experiments>3</experiments>
</comment>
<comment type="subcellular location">
    <subcellularLocation>
        <location>Secreted</location>
    </subcellularLocation>
</comment>
<comment type="alternative products">
    <event type="alternative splicing"/>
    <isoform>
        <id>P04279-1</id>
        <name>1</name>
        <sequence type="displayed"/>
    </isoform>
    <isoform>
        <id>P04279-2</id>
        <name>2</name>
        <sequence type="described" ref="VSP_004385"/>
    </isoform>
</comment>
<comment type="tissue specificity">
    <text>Seminal vesicle.</text>
</comment>
<comment type="PTM">
    <text>Transglutaminase substrate.</text>
</comment>
<comment type="PTM">
    <text>Rapidly cleaved after ejaculation by KLK3/PSA, resulting in liquefaction of the semen coagulum and the progressive release of motile spermatozoa.</text>
</comment>
<comment type="similarity">
    <text evidence="10">Belongs to the semenogelin family.</text>
</comment>
<comment type="online information" name="Protein Spotlight">
    <link uri="https://www.proteinspotlight.org/back_issues/062"/>
    <text>Shackled sperm - Issue 62 of September 2005</text>
</comment>
<gene>
    <name type="primary">SEMG1</name>
    <name type="synonym">SEMG</name>
</gene>
<keyword id="KW-0002">3D-structure</keyword>
<keyword id="KW-0025">Alternative splicing</keyword>
<keyword id="KW-0903">Direct protein sequencing</keyword>
<keyword id="KW-1015">Disulfide bond</keyword>
<keyword id="KW-1267">Proteomics identification</keyword>
<keyword id="KW-0873">Pyrrolidone carboxylic acid</keyword>
<keyword id="KW-1185">Reference proteome</keyword>
<keyword id="KW-0677">Repeat</keyword>
<keyword id="KW-0964">Secreted</keyword>
<keyword id="KW-0732">Signal</keyword>